<organism>
    <name type="scientific">Xenopus laevis</name>
    <name type="common">African clawed frog</name>
    <dbReference type="NCBI Taxonomy" id="8355"/>
    <lineage>
        <taxon>Eukaryota</taxon>
        <taxon>Metazoa</taxon>
        <taxon>Chordata</taxon>
        <taxon>Craniata</taxon>
        <taxon>Vertebrata</taxon>
        <taxon>Euteleostomi</taxon>
        <taxon>Amphibia</taxon>
        <taxon>Batrachia</taxon>
        <taxon>Anura</taxon>
        <taxon>Pipoidea</taxon>
        <taxon>Pipidae</taxon>
        <taxon>Xenopodinae</taxon>
        <taxon>Xenopus</taxon>
        <taxon>Xenopus</taxon>
    </lineage>
</organism>
<dbReference type="EC" id="3.4.24.-" evidence="1"/>
<dbReference type="EMBL" id="BC057754">
    <property type="protein sequence ID" value="AAH57754.1"/>
    <property type="molecule type" value="mRNA"/>
</dbReference>
<dbReference type="RefSeq" id="NP_001079981.1">
    <property type="nucleotide sequence ID" value="NM_001086512.1"/>
</dbReference>
<dbReference type="SMR" id="Q6PF24"/>
<dbReference type="DNASU" id="379672"/>
<dbReference type="GeneID" id="379672"/>
<dbReference type="KEGG" id="xla:379672"/>
<dbReference type="AGR" id="Xenbase:XB-GENE-952663"/>
<dbReference type="CTD" id="379672"/>
<dbReference type="Xenbase" id="XB-GENE-952663">
    <property type="gene designation" value="pitrm1.L"/>
</dbReference>
<dbReference type="OrthoDB" id="10250783at2759"/>
<dbReference type="Proteomes" id="UP000186698">
    <property type="component" value="Chromosome 6L"/>
</dbReference>
<dbReference type="Bgee" id="379672">
    <property type="expression patterns" value="Expressed in blastula and 19 other cell types or tissues"/>
</dbReference>
<dbReference type="GO" id="GO:0005759">
    <property type="term" value="C:mitochondrial matrix"/>
    <property type="evidence" value="ECO:0000250"/>
    <property type="project" value="UniProtKB"/>
</dbReference>
<dbReference type="GO" id="GO:0046872">
    <property type="term" value="F:metal ion binding"/>
    <property type="evidence" value="ECO:0007669"/>
    <property type="project" value="UniProtKB-KW"/>
</dbReference>
<dbReference type="GO" id="GO:0004222">
    <property type="term" value="F:metalloendopeptidase activity"/>
    <property type="evidence" value="ECO:0000250"/>
    <property type="project" value="UniProtKB"/>
</dbReference>
<dbReference type="GO" id="GO:0016485">
    <property type="term" value="P:protein processing"/>
    <property type="evidence" value="ECO:0000318"/>
    <property type="project" value="GO_Central"/>
</dbReference>
<dbReference type="GO" id="GO:0006508">
    <property type="term" value="P:proteolysis"/>
    <property type="evidence" value="ECO:0000250"/>
    <property type="project" value="UniProtKB"/>
</dbReference>
<dbReference type="FunFam" id="3.30.830.10:FF:000013">
    <property type="entry name" value="Mitochondrial presequence protease"/>
    <property type="match status" value="1"/>
</dbReference>
<dbReference type="FunFam" id="3.30.830.10:FF:000020">
    <property type="entry name" value="Mitochondrial presequence protease"/>
    <property type="match status" value="1"/>
</dbReference>
<dbReference type="FunFam" id="3.30.830.10:FF:000009">
    <property type="entry name" value="Presequence protease, mitochondrial"/>
    <property type="match status" value="1"/>
</dbReference>
<dbReference type="FunFam" id="3.30.830.10:FF:000011">
    <property type="entry name" value="Presequence protease, mitochondrial"/>
    <property type="match status" value="1"/>
</dbReference>
<dbReference type="Gene3D" id="3.30.830.10">
    <property type="entry name" value="Metalloenzyme, LuxS/M16 peptidase-like"/>
    <property type="match status" value="4"/>
</dbReference>
<dbReference type="InterPro" id="IPR011249">
    <property type="entry name" value="Metalloenz_LuxS/M16"/>
</dbReference>
<dbReference type="InterPro" id="IPR011765">
    <property type="entry name" value="Pept_M16_N"/>
</dbReference>
<dbReference type="InterPro" id="IPR007863">
    <property type="entry name" value="Peptidase_M16_C"/>
</dbReference>
<dbReference type="InterPro" id="IPR013578">
    <property type="entry name" value="Peptidase_M16C_assoc"/>
</dbReference>
<dbReference type="InterPro" id="IPR055130">
    <property type="entry name" value="PreP_C"/>
</dbReference>
<dbReference type="PANTHER" id="PTHR43016">
    <property type="entry name" value="PRESEQUENCE PROTEASE"/>
    <property type="match status" value="1"/>
</dbReference>
<dbReference type="PANTHER" id="PTHR43016:SF13">
    <property type="entry name" value="PRESEQUENCE PROTEASE, MITOCHONDRIAL"/>
    <property type="match status" value="1"/>
</dbReference>
<dbReference type="Pfam" id="PF08367">
    <property type="entry name" value="M16C_assoc"/>
    <property type="match status" value="1"/>
</dbReference>
<dbReference type="Pfam" id="PF00675">
    <property type="entry name" value="Peptidase_M16"/>
    <property type="match status" value="1"/>
</dbReference>
<dbReference type="Pfam" id="PF05193">
    <property type="entry name" value="Peptidase_M16_C"/>
    <property type="match status" value="1"/>
</dbReference>
<dbReference type="Pfam" id="PF22516">
    <property type="entry name" value="PreP_C"/>
    <property type="match status" value="1"/>
</dbReference>
<dbReference type="SMART" id="SM01264">
    <property type="entry name" value="M16C_associated"/>
    <property type="match status" value="1"/>
</dbReference>
<dbReference type="SUPFAM" id="SSF63411">
    <property type="entry name" value="LuxS/MPP-like metallohydrolase"/>
    <property type="match status" value="4"/>
</dbReference>
<reference key="1">
    <citation type="submission" date="2003-09" db="EMBL/GenBank/DDBJ databases">
        <authorList>
            <consortium name="NIH - Xenopus Gene Collection (XGC) project"/>
        </authorList>
    </citation>
    <scope>NUCLEOTIDE SEQUENCE [LARGE SCALE MRNA]</scope>
    <source>
        <tissue>Ovary</tissue>
    </source>
</reference>
<comment type="function">
    <text evidence="1">Metalloendopeptidase of the mitochondrial matrix that functions in peptide cleavage and degradation rather than in protein processing. Has an ATP-independent activity. Specifically cleaves peptides in the range of 5 to 65 residues. Shows a preference for cleavage after small polar residues and before basic residues, but without any positional preference. Degrades the transit peptides of mitochondrial proteins after their cleavage. Also degrades other unstructured peptides.</text>
</comment>
<comment type="cofactor">
    <cofactor evidence="1">
        <name>Zn(2+)</name>
        <dbReference type="ChEBI" id="CHEBI:29105"/>
    </cofactor>
    <text evidence="1">Binds 1 zinc ion per subunit.</text>
</comment>
<comment type="activity regulation">
    <text evidence="1">Mainly exists in a closed and catalytically competent conformation but a closed-to-open switch allows substrate entry into the catalytic chamber. Substrate binding induces closure and dimerization. A disulfide bond may lock the enzyme in a closed conformation preventing substrate entry into the catalytic chamber, participating in redox regulation of the enzyme. Inhibited by metal-chelating agents. Inhibited by nickel and zinc excess, and slightly activated by manganese.</text>
</comment>
<comment type="subunit">
    <text evidence="1">Monomer and homodimer; homodimerization is induced by binding of the substrate.</text>
</comment>
<comment type="subcellular location">
    <subcellularLocation>
        <location evidence="1">Mitochondrion matrix</location>
    </subcellularLocation>
</comment>
<comment type="PTM">
    <text evidence="1">A disulfide bond locks the enzyme in the closed conformation preventing substrate entry into the catalytic chamber.</text>
</comment>
<comment type="similarity">
    <text evidence="4">Belongs to the peptidase M16 family. PreP subfamily.</text>
</comment>
<accession>Q6PF24</accession>
<sequence length="1027" mass="116680">MIRQCWAGLRLCRALYQTSYRWHGKSACERALRYSPGESIHGFTVNEVTPVPELFLTAVKLSHDNTGAKYLHVAREDSNNLFSVQFRTTPLDSTGVPHILEHTVLCGSQKYPCRDPFFKMLNRSLSTFMNAFTASDYTMYPFSTQNAKDFQNLLSVYLDAVFFPCLRELDFWQEGWRLEHENPEDPNSPLIFKGIVFNEMKGAFTDNEKVFSQHLQNKLLPDHTYSVVSGGEPLNIPDLTWEQLKEFHATHYHPSNARFFTYGNLPLEMHLKQIHEDALSKFGRIDPKTSVPPQERWQSPREYSISCGVDSFASDPEKQTMVSVNFLLSEITDSFEAFTLSLLSSLMVDGPNSPFYKALIEANLGTDFSPDTGFNNYTRETYFSIGLQGINKEDSEKVKHIINRTINEIAEQGIEPERIEALLHKLEIQMKHQSTSFGLTLASYIASCWNHEGDPVDLLKIGDKISRFRQCLKENPKFLQDKVKQYFQVNQHRMMLSMSPDEQHYDKEEQLEEEKLTQKVKALSEEERKQIYEKGLELISLQSKPQDFSCLPALKVSDIEPQIPLTDLEIAYAGDVPVQYCTQPTNGMVYFRAVSSLNTLPEELKPYVPLFCSVITKLGCGVYNYREQAQQMELTTGGMSVCPHIISDDSSLDTYEQGILFSSLCLDRNMPDMMHLWSEIFNSPHFDDEERLRVLVRMSAQEMSNGIPDSGHVYASIRASRTLTPTGELQELFSGMDQVKMIKRIAEMPDMGSILRKLSRIRKYVLLSDNMRCSINAAPQQMETASKEMEHFLTGITRSKKERKAIRPHVVEKSSNPSPSGSEISRTATRKLVGDPTFKPCQMKTHFCLSFPVNYIGECVRTVPYTHPDYASLRILARIMTAKFLHGEIREKGGAYGGGAKLSFDGIFGFYSYRDPNSLSTLSTFQKATDWAKSGQFSQQDVDEAKLSVFSAVDSPIAPSDKGMNHFLHGISDEMKQRHREELFAVTHSDLTNASNKYLTAGQCTRGTAILGPENKNIAKDPSWIIR</sequence>
<protein>
    <recommendedName>
        <fullName evidence="4">Presequence protease, mitochondrial</fullName>
        <ecNumber evidence="1">3.4.24.-</ecNumber>
    </recommendedName>
    <alternativeName>
        <fullName evidence="1">Pitrilysin metalloproteinase 1</fullName>
    </alternativeName>
</protein>
<gene>
    <name type="primary">pitrm1</name>
</gene>
<proteinExistence type="evidence at transcript level"/>
<evidence type="ECO:0000250" key="1">
    <source>
        <dbReference type="UniProtKB" id="Q5JRX3"/>
    </source>
</evidence>
<evidence type="ECO:0000255" key="2"/>
<evidence type="ECO:0000256" key="3">
    <source>
        <dbReference type="SAM" id="MobiDB-lite"/>
    </source>
</evidence>
<evidence type="ECO:0000305" key="4"/>
<keyword id="KW-1015">Disulfide bond</keyword>
<keyword id="KW-0378">Hydrolase</keyword>
<keyword id="KW-0479">Metal-binding</keyword>
<keyword id="KW-0482">Metalloprotease</keyword>
<keyword id="KW-0496">Mitochondrion</keyword>
<keyword id="KW-0645">Protease</keyword>
<keyword id="KW-1185">Reference proteome</keyword>
<keyword id="KW-0809">Transit peptide</keyword>
<keyword id="KW-0862">Zinc</keyword>
<feature type="transit peptide" description="Mitochondrion" evidence="2">
    <location>
        <begin position="1"/>
        <end position="22"/>
    </location>
</feature>
<feature type="chain" id="PRO_0000249935" description="Presequence protease, mitochondrial">
    <location>
        <begin position="23"/>
        <end position="1027"/>
    </location>
</feature>
<feature type="region of interest" description="Disordered" evidence="3">
    <location>
        <begin position="803"/>
        <end position="827"/>
    </location>
</feature>
<feature type="compositionally biased region" description="Low complexity" evidence="3">
    <location>
        <begin position="814"/>
        <end position="825"/>
    </location>
</feature>
<feature type="active site" description="Proton acceptor" evidence="1">
    <location>
        <position position="101"/>
    </location>
</feature>
<feature type="binding site" evidence="1">
    <location>
        <position position="98"/>
    </location>
    <ligand>
        <name>Zn(2+)</name>
        <dbReference type="ChEBI" id="CHEBI:29105"/>
        <note>catalytic</note>
    </ligand>
</feature>
<feature type="binding site" evidence="1">
    <location>
        <position position="102"/>
    </location>
    <ligand>
        <name>Zn(2+)</name>
        <dbReference type="ChEBI" id="CHEBI:29105"/>
        <note>catalytic</note>
    </ligand>
</feature>
<feature type="binding site" evidence="1">
    <location>
        <position position="199"/>
    </location>
    <ligand>
        <name>Zn(2+)</name>
        <dbReference type="ChEBI" id="CHEBI:29105"/>
        <note>catalytic</note>
    </ligand>
</feature>
<feature type="disulfide bond" evidence="1">
    <location>
        <begin position="113"/>
        <end position="550"/>
    </location>
</feature>
<name>PREP_XENLA</name>